<name>RL5_ECO57</name>
<sequence length="179" mass="20302">MAKLHDYYKDEVVKKLMTEFNYNSVMQVPRVEKITLNMGVGEAIADKKLLDNAAADLAAISGQKPLITKARKSVAGFKIRQGYPIGCKVTLRGERMWEFFERLITIAVPRIRDFRGLSAKSFDGRGNYSMGVREQIIFPEIDYDKVDRVRGLDITITTTAKSDEEGRALLAAFDFPFRK</sequence>
<dbReference type="EMBL" id="AE005174">
    <property type="protein sequence ID" value="AAG58429.1"/>
    <property type="molecule type" value="Genomic_DNA"/>
</dbReference>
<dbReference type="EMBL" id="BA000007">
    <property type="protein sequence ID" value="BAB37596.1"/>
    <property type="molecule type" value="Genomic_DNA"/>
</dbReference>
<dbReference type="PIR" id="A85996">
    <property type="entry name" value="A85996"/>
</dbReference>
<dbReference type="PIR" id="E91150">
    <property type="entry name" value="E91150"/>
</dbReference>
<dbReference type="RefSeq" id="NP_312200.1">
    <property type="nucleotide sequence ID" value="NC_002695.1"/>
</dbReference>
<dbReference type="RefSeq" id="WP_001096200.1">
    <property type="nucleotide sequence ID" value="NZ_VOAI01000041.1"/>
</dbReference>
<dbReference type="SMR" id="P62401"/>
<dbReference type="STRING" id="155864.Z4678"/>
<dbReference type="GeneID" id="915975"/>
<dbReference type="GeneID" id="93778679"/>
<dbReference type="KEGG" id="ece:Z4678"/>
<dbReference type="KEGG" id="ecs:ECs_4173"/>
<dbReference type="PATRIC" id="fig|386585.9.peg.4356"/>
<dbReference type="eggNOG" id="COG0094">
    <property type="taxonomic scope" value="Bacteria"/>
</dbReference>
<dbReference type="HOGENOM" id="CLU_061015_2_1_6"/>
<dbReference type="OMA" id="PIGCAVT"/>
<dbReference type="Proteomes" id="UP000000558">
    <property type="component" value="Chromosome"/>
</dbReference>
<dbReference type="Proteomes" id="UP000002519">
    <property type="component" value="Chromosome"/>
</dbReference>
<dbReference type="GO" id="GO:1990904">
    <property type="term" value="C:ribonucleoprotein complex"/>
    <property type="evidence" value="ECO:0007669"/>
    <property type="project" value="UniProtKB-KW"/>
</dbReference>
<dbReference type="GO" id="GO:0005840">
    <property type="term" value="C:ribosome"/>
    <property type="evidence" value="ECO:0007669"/>
    <property type="project" value="UniProtKB-KW"/>
</dbReference>
<dbReference type="GO" id="GO:0019843">
    <property type="term" value="F:rRNA binding"/>
    <property type="evidence" value="ECO:0007669"/>
    <property type="project" value="UniProtKB-UniRule"/>
</dbReference>
<dbReference type="GO" id="GO:0003735">
    <property type="term" value="F:structural constituent of ribosome"/>
    <property type="evidence" value="ECO:0007669"/>
    <property type="project" value="InterPro"/>
</dbReference>
<dbReference type="GO" id="GO:0000049">
    <property type="term" value="F:tRNA binding"/>
    <property type="evidence" value="ECO:0007669"/>
    <property type="project" value="UniProtKB-UniRule"/>
</dbReference>
<dbReference type="GO" id="GO:0006412">
    <property type="term" value="P:translation"/>
    <property type="evidence" value="ECO:0007669"/>
    <property type="project" value="UniProtKB-UniRule"/>
</dbReference>
<dbReference type="FunFam" id="3.30.1440.10:FF:000001">
    <property type="entry name" value="50S ribosomal protein L5"/>
    <property type="match status" value="1"/>
</dbReference>
<dbReference type="Gene3D" id="3.30.1440.10">
    <property type="match status" value="1"/>
</dbReference>
<dbReference type="HAMAP" id="MF_01333_B">
    <property type="entry name" value="Ribosomal_uL5_B"/>
    <property type="match status" value="1"/>
</dbReference>
<dbReference type="InterPro" id="IPR002132">
    <property type="entry name" value="Ribosomal_uL5"/>
</dbReference>
<dbReference type="InterPro" id="IPR020930">
    <property type="entry name" value="Ribosomal_uL5_bac-type"/>
</dbReference>
<dbReference type="InterPro" id="IPR031309">
    <property type="entry name" value="Ribosomal_uL5_C"/>
</dbReference>
<dbReference type="InterPro" id="IPR020929">
    <property type="entry name" value="Ribosomal_uL5_CS"/>
</dbReference>
<dbReference type="InterPro" id="IPR022803">
    <property type="entry name" value="Ribosomal_uL5_dom_sf"/>
</dbReference>
<dbReference type="InterPro" id="IPR031310">
    <property type="entry name" value="Ribosomal_uL5_N"/>
</dbReference>
<dbReference type="NCBIfam" id="NF000585">
    <property type="entry name" value="PRK00010.1"/>
    <property type="match status" value="1"/>
</dbReference>
<dbReference type="PANTHER" id="PTHR11994">
    <property type="entry name" value="60S RIBOSOMAL PROTEIN L11-RELATED"/>
    <property type="match status" value="1"/>
</dbReference>
<dbReference type="Pfam" id="PF00281">
    <property type="entry name" value="Ribosomal_L5"/>
    <property type="match status" value="1"/>
</dbReference>
<dbReference type="Pfam" id="PF00673">
    <property type="entry name" value="Ribosomal_L5_C"/>
    <property type="match status" value="1"/>
</dbReference>
<dbReference type="PIRSF" id="PIRSF002161">
    <property type="entry name" value="Ribosomal_L5"/>
    <property type="match status" value="1"/>
</dbReference>
<dbReference type="SUPFAM" id="SSF55282">
    <property type="entry name" value="RL5-like"/>
    <property type="match status" value="1"/>
</dbReference>
<dbReference type="PROSITE" id="PS00358">
    <property type="entry name" value="RIBOSOMAL_L5"/>
    <property type="match status" value="1"/>
</dbReference>
<reference key="1">
    <citation type="journal article" date="2001" name="Nature">
        <title>Genome sequence of enterohaemorrhagic Escherichia coli O157:H7.</title>
        <authorList>
            <person name="Perna N.T."/>
            <person name="Plunkett G. III"/>
            <person name="Burland V."/>
            <person name="Mau B."/>
            <person name="Glasner J.D."/>
            <person name="Rose D.J."/>
            <person name="Mayhew G.F."/>
            <person name="Evans P.S."/>
            <person name="Gregor J."/>
            <person name="Kirkpatrick H.A."/>
            <person name="Posfai G."/>
            <person name="Hackett J."/>
            <person name="Klink S."/>
            <person name="Boutin A."/>
            <person name="Shao Y."/>
            <person name="Miller L."/>
            <person name="Grotbeck E.J."/>
            <person name="Davis N.W."/>
            <person name="Lim A."/>
            <person name="Dimalanta E.T."/>
            <person name="Potamousis K."/>
            <person name="Apodaca J."/>
            <person name="Anantharaman T.S."/>
            <person name="Lin J."/>
            <person name="Yen G."/>
            <person name="Schwartz D.C."/>
            <person name="Welch R.A."/>
            <person name="Blattner F.R."/>
        </authorList>
    </citation>
    <scope>NUCLEOTIDE SEQUENCE [LARGE SCALE GENOMIC DNA]</scope>
    <source>
        <strain>O157:H7 / EDL933 / ATCC 700927 / EHEC</strain>
    </source>
</reference>
<reference key="2">
    <citation type="journal article" date="2001" name="DNA Res.">
        <title>Complete genome sequence of enterohemorrhagic Escherichia coli O157:H7 and genomic comparison with a laboratory strain K-12.</title>
        <authorList>
            <person name="Hayashi T."/>
            <person name="Makino K."/>
            <person name="Ohnishi M."/>
            <person name="Kurokawa K."/>
            <person name="Ishii K."/>
            <person name="Yokoyama K."/>
            <person name="Han C.-G."/>
            <person name="Ohtsubo E."/>
            <person name="Nakayama K."/>
            <person name="Murata T."/>
            <person name="Tanaka M."/>
            <person name="Tobe T."/>
            <person name="Iida T."/>
            <person name="Takami H."/>
            <person name="Honda T."/>
            <person name="Sasakawa C."/>
            <person name="Ogasawara N."/>
            <person name="Yasunaga T."/>
            <person name="Kuhara S."/>
            <person name="Shiba T."/>
            <person name="Hattori M."/>
            <person name="Shinagawa H."/>
        </authorList>
    </citation>
    <scope>NUCLEOTIDE SEQUENCE [LARGE SCALE GENOMIC DNA]</scope>
    <source>
        <strain>O157:H7 / Sakai / RIMD 0509952 / EHEC</strain>
    </source>
</reference>
<organism>
    <name type="scientific">Escherichia coli O157:H7</name>
    <dbReference type="NCBI Taxonomy" id="83334"/>
    <lineage>
        <taxon>Bacteria</taxon>
        <taxon>Pseudomonadati</taxon>
        <taxon>Pseudomonadota</taxon>
        <taxon>Gammaproteobacteria</taxon>
        <taxon>Enterobacterales</taxon>
        <taxon>Enterobacteriaceae</taxon>
        <taxon>Escherichia</taxon>
    </lineage>
</organism>
<proteinExistence type="inferred from homology"/>
<evidence type="ECO:0000250" key="1"/>
<evidence type="ECO:0000255" key="2">
    <source>
        <dbReference type="HAMAP-Rule" id="MF_01333"/>
    </source>
</evidence>
<evidence type="ECO:0000305" key="3"/>
<protein>
    <recommendedName>
        <fullName evidence="2">Large ribosomal subunit protein uL5</fullName>
    </recommendedName>
    <alternativeName>
        <fullName evidence="3">50S ribosomal protein L5</fullName>
    </alternativeName>
</protein>
<comment type="function">
    <text evidence="2">This is one of the proteins that bind and probably mediate the attachment of the 5S RNA into the large ribosomal subunit, where it forms part of the central protuberance. In the 70S ribosome it contacts protein S13 of the 30S subunit (bridge B1b), connecting the 2 subunits; this bridge is implicated in subunit movement. Contacts the P site tRNA; the 5S rRNA and some of its associated proteins might help stabilize positioning of ribosome-bound tRNAs.</text>
</comment>
<comment type="subunit">
    <text evidence="2">Part of the 50S ribosomal subunit; part of the 5S rRNA/L5/L18/L25 subcomplex. Contacts the 5S rRNA and the P site tRNA. Forms a bridge to the 30S subunit in the 70S ribosome.</text>
</comment>
<comment type="similarity">
    <text evidence="2">Belongs to the universal ribosomal protein uL5 family.</text>
</comment>
<gene>
    <name evidence="2" type="primary">rplE</name>
    <name type="ordered locus">Z4678</name>
    <name type="ordered locus">ECs4173</name>
</gene>
<keyword id="KW-0007">Acetylation</keyword>
<keyword id="KW-1185">Reference proteome</keyword>
<keyword id="KW-0687">Ribonucleoprotein</keyword>
<keyword id="KW-0689">Ribosomal protein</keyword>
<keyword id="KW-0694">RNA-binding</keyword>
<keyword id="KW-0699">rRNA-binding</keyword>
<keyword id="KW-0820">tRNA-binding</keyword>
<accession>P62401</accession>
<accession>P02389</accession>
<feature type="initiator methionine" description="Removed" evidence="1">
    <location>
        <position position="1"/>
    </location>
</feature>
<feature type="chain" id="PRO_0000124927" description="Large ribosomal subunit protein uL5">
    <location>
        <begin position="2"/>
        <end position="179"/>
    </location>
</feature>
<feature type="modified residue" description="N6-acetyllysine" evidence="2">
    <location>
        <position position="3"/>
    </location>
</feature>